<proteinExistence type="inferred from homology"/>
<reference key="1">
    <citation type="journal article" date="1997" name="Nature">
        <title>The complete genome sequence of the hyperthermophilic, sulphate-reducing archaeon Archaeoglobus fulgidus.</title>
        <authorList>
            <person name="Klenk H.-P."/>
            <person name="Clayton R.A."/>
            <person name="Tomb J.-F."/>
            <person name="White O."/>
            <person name="Nelson K.E."/>
            <person name="Ketchum K.A."/>
            <person name="Dodson R.J."/>
            <person name="Gwinn M.L."/>
            <person name="Hickey E.K."/>
            <person name="Peterson J.D."/>
            <person name="Richardson D.L."/>
            <person name="Kerlavage A.R."/>
            <person name="Graham D.E."/>
            <person name="Kyrpides N.C."/>
            <person name="Fleischmann R.D."/>
            <person name="Quackenbush J."/>
            <person name="Lee N.H."/>
            <person name="Sutton G.G."/>
            <person name="Gill S.R."/>
            <person name="Kirkness E.F."/>
            <person name="Dougherty B.A."/>
            <person name="McKenney K."/>
            <person name="Adams M.D."/>
            <person name="Loftus B.J."/>
            <person name="Peterson S.N."/>
            <person name="Reich C.I."/>
            <person name="McNeil L.K."/>
            <person name="Badger J.H."/>
            <person name="Glodek A."/>
            <person name="Zhou L."/>
            <person name="Overbeek R."/>
            <person name="Gocayne J.D."/>
            <person name="Weidman J.F."/>
            <person name="McDonald L.A."/>
            <person name="Utterback T.R."/>
            <person name="Cotton M.D."/>
            <person name="Spriggs T."/>
            <person name="Artiach P."/>
            <person name="Kaine B.P."/>
            <person name="Sykes S.M."/>
            <person name="Sadow P.W."/>
            <person name="D'Andrea K.P."/>
            <person name="Bowman C."/>
            <person name="Fujii C."/>
            <person name="Garland S.A."/>
            <person name="Mason T.M."/>
            <person name="Olsen G.J."/>
            <person name="Fraser C.M."/>
            <person name="Smith H.O."/>
            <person name="Woese C.R."/>
            <person name="Venter J.C."/>
        </authorList>
    </citation>
    <scope>NUCLEOTIDE SEQUENCE [LARGE SCALE GENOMIC DNA]</scope>
    <source>
        <strain>ATCC 49558 / DSM 4304 / JCM 9628 / NBRC 100126 / VC-16</strain>
    </source>
</reference>
<sequence>MNVTPWEVEGVIDYSKLIEEFGMQPFSEVLPEIDNPHILMRRGAIFGHRDYWRIIEAMQKKEPWAVMSGFMPSGLPHFGHKMTMDEIVWHQSAGGKAFVAIADMEAHSVRGLSWEKTRELGMLYIKSIIALGLREDAVIYFQSKSSHVKDLAFELSAEVNFSELRAIYGFNSDTSLAKMFVTAIQAADILHPQLSDFGGPKPVVVPVGADQDPHMRLTRDLAARISIFSFEPVEGGVRVRSRKGAEYLSSLRDLEFDKKIYEEHMDIFGEAEEIERAVRKIEVEIGGFAFIPPSSTYHRFTTGLTGGKMSSSKPESYISLLDPPEEGAKKVMKAFTGGRATAEEQRRLGGEPDRCVVFELYSFHLIDSDEELNQIEAECREGRLLCGKCKKMAAELVKSFLKEHQEKMEAVDLSNYTIIG</sequence>
<evidence type="ECO:0000255" key="1">
    <source>
        <dbReference type="HAMAP-Rule" id="MF_00140"/>
    </source>
</evidence>
<gene>
    <name evidence="1" type="primary">trpS</name>
    <name type="ordered locus">AF_1694</name>
</gene>
<comment type="catalytic activity">
    <reaction evidence="1">
        <text>tRNA(Trp) + L-tryptophan + ATP = L-tryptophyl-tRNA(Trp) + AMP + diphosphate + H(+)</text>
        <dbReference type="Rhea" id="RHEA:24080"/>
        <dbReference type="Rhea" id="RHEA-COMP:9671"/>
        <dbReference type="Rhea" id="RHEA-COMP:9705"/>
        <dbReference type="ChEBI" id="CHEBI:15378"/>
        <dbReference type="ChEBI" id="CHEBI:30616"/>
        <dbReference type="ChEBI" id="CHEBI:33019"/>
        <dbReference type="ChEBI" id="CHEBI:57912"/>
        <dbReference type="ChEBI" id="CHEBI:78442"/>
        <dbReference type="ChEBI" id="CHEBI:78535"/>
        <dbReference type="ChEBI" id="CHEBI:456215"/>
        <dbReference type="EC" id="6.1.1.2"/>
    </reaction>
</comment>
<comment type="subcellular location">
    <subcellularLocation>
        <location evidence="1">Cytoplasm</location>
    </subcellularLocation>
</comment>
<comment type="similarity">
    <text evidence="1">Belongs to the class-I aminoacyl-tRNA synthetase family.</text>
</comment>
<accession>O28579</accession>
<organism>
    <name type="scientific">Archaeoglobus fulgidus (strain ATCC 49558 / DSM 4304 / JCM 9628 / NBRC 100126 / VC-16)</name>
    <dbReference type="NCBI Taxonomy" id="224325"/>
    <lineage>
        <taxon>Archaea</taxon>
        <taxon>Methanobacteriati</taxon>
        <taxon>Methanobacteriota</taxon>
        <taxon>Archaeoglobi</taxon>
        <taxon>Archaeoglobales</taxon>
        <taxon>Archaeoglobaceae</taxon>
        <taxon>Archaeoglobus</taxon>
    </lineage>
</organism>
<feature type="chain" id="PRO_0000136719" description="Tryptophan--tRNA ligase">
    <location>
        <begin position="1"/>
        <end position="420"/>
    </location>
</feature>
<feature type="short sequence motif" description="'HIGH' region">
    <location>
        <begin position="72"/>
        <end position="80"/>
    </location>
</feature>
<feature type="short sequence motif" description="'KMSKS' region">
    <location>
        <begin position="308"/>
        <end position="312"/>
    </location>
</feature>
<keyword id="KW-0030">Aminoacyl-tRNA synthetase</keyword>
<keyword id="KW-0067">ATP-binding</keyword>
<keyword id="KW-0963">Cytoplasm</keyword>
<keyword id="KW-0436">Ligase</keyword>
<keyword id="KW-0547">Nucleotide-binding</keyword>
<keyword id="KW-0648">Protein biosynthesis</keyword>
<keyword id="KW-1185">Reference proteome</keyword>
<dbReference type="EC" id="6.1.1.2" evidence="1"/>
<dbReference type="EMBL" id="AE000782">
    <property type="protein sequence ID" value="AAB89554.1"/>
    <property type="molecule type" value="Genomic_DNA"/>
</dbReference>
<dbReference type="PIR" id="E69461">
    <property type="entry name" value="E69461"/>
</dbReference>
<dbReference type="RefSeq" id="WP_010879190.1">
    <property type="nucleotide sequence ID" value="NC_000917.1"/>
</dbReference>
<dbReference type="SMR" id="O28579"/>
<dbReference type="STRING" id="224325.AF_1694"/>
<dbReference type="PaxDb" id="224325-AF_1694"/>
<dbReference type="EnsemblBacteria" id="AAB89554">
    <property type="protein sequence ID" value="AAB89554"/>
    <property type="gene ID" value="AF_1694"/>
</dbReference>
<dbReference type="GeneID" id="1484917"/>
<dbReference type="KEGG" id="afu:AF_1694"/>
<dbReference type="eggNOG" id="arCOG01887">
    <property type="taxonomic scope" value="Archaea"/>
</dbReference>
<dbReference type="HOGENOM" id="CLU_032621_3_0_2"/>
<dbReference type="OrthoDB" id="371821at2157"/>
<dbReference type="PhylomeDB" id="O28579"/>
<dbReference type="BRENDA" id="6.1.1.2">
    <property type="organism ID" value="414"/>
</dbReference>
<dbReference type="Proteomes" id="UP000002199">
    <property type="component" value="Chromosome"/>
</dbReference>
<dbReference type="GO" id="GO:0005737">
    <property type="term" value="C:cytoplasm"/>
    <property type="evidence" value="ECO:0007669"/>
    <property type="project" value="UniProtKB-SubCell"/>
</dbReference>
<dbReference type="GO" id="GO:0005524">
    <property type="term" value="F:ATP binding"/>
    <property type="evidence" value="ECO:0007669"/>
    <property type="project" value="UniProtKB-UniRule"/>
</dbReference>
<dbReference type="GO" id="GO:0004830">
    <property type="term" value="F:tryptophan-tRNA ligase activity"/>
    <property type="evidence" value="ECO:0007669"/>
    <property type="project" value="UniProtKB-UniRule"/>
</dbReference>
<dbReference type="GO" id="GO:0006436">
    <property type="term" value="P:tryptophanyl-tRNA aminoacylation"/>
    <property type="evidence" value="ECO:0007669"/>
    <property type="project" value="UniProtKB-UniRule"/>
</dbReference>
<dbReference type="CDD" id="cd00806">
    <property type="entry name" value="TrpRS_core"/>
    <property type="match status" value="1"/>
</dbReference>
<dbReference type="FunFam" id="3.40.50.620:FF:000207">
    <property type="entry name" value="Tryptophan--tRNA ligase"/>
    <property type="match status" value="1"/>
</dbReference>
<dbReference type="Gene3D" id="3.40.50.620">
    <property type="entry name" value="HUPs"/>
    <property type="match status" value="1"/>
</dbReference>
<dbReference type="Gene3D" id="1.10.240.10">
    <property type="entry name" value="Tyrosyl-Transfer RNA Synthetase"/>
    <property type="match status" value="1"/>
</dbReference>
<dbReference type="HAMAP" id="MF_00140_A">
    <property type="entry name" value="Trp_tRNA_synth_A"/>
    <property type="match status" value="1"/>
</dbReference>
<dbReference type="InterPro" id="IPR002305">
    <property type="entry name" value="aa-tRNA-synth_Ic"/>
</dbReference>
<dbReference type="InterPro" id="IPR014729">
    <property type="entry name" value="Rossmann-like_a/b/a_fold"/>
</dbReference>
<dbReference type="InterPro" id="IPR002306">
    <property type="entry name" value="Trp-tRNA-ligase"/>
</dbReference>
<dbReference type="InterPro" id="IPR020653">
    <property type="entry name" value="Tryptophan-tRNA-ligase_arc"/>
</dbReference>
<dbReference type="NCBIfam" id="NF008926">
    <property type="entry name" value="PRK12285.1-3"/>
    <property type="match status" value="1"/>
</dbReference>
<dbReference type="PANTHER" id="PTHR10055:SF5">
    <property type="entry name" value="TRYPTOPHAN--TRNA LIGASE"/>
    <property type="match status" value="1"/>
</dbReference>
<dbReference type="PANTHER" id="PTHR10055">
    <property type="entry name" value="TRYPTOPHANYL-TRNA SYNTHETASE"/>
    <property type="match status" value="1"/>
</dbReference>
<dbReference type="Pfam" id="PF00579">
    <property type="entry name" value="tRNA-synt_1b"/>
    <property type="match status" value="2"/>
</dbReference>
<dbReference type="PRINTS" id="PR01039">
    <property type="entry name" value="TRNASYNTHTRP"/>
</dbReference>
<dbReference type="SUPFAM" id="SSF52374">
    <property type="entry name" value="Nucleotidylyl transferase"/>
    <property type="match status" value="1"/>
</dbReference>
<protein>
    <recommendedName>
        <fullName evidence="1">Tryptophan--tRNA ligase</fullName>
        <ecNumber evidence="1">6.1.1.2</ecNumber>
    </recommendedName>
    <alternativeName>
        <fullName evidence="1">Tryptophanyl-tRNA synthetase</fullName>
        <shortName evidence="1">TrpRS</shortName>
    </alternativeName>
</protein>
<name>SYW_ARCFU</name>